<organism>
    <name type="scientific">Dechloromonas aromatica (strain RCB)</name>
    <dbReference type="NCBI Taxonomy" id="159087"/>
    <lineage>
        <taxon>Bacteria</taxon>
        <taxon>Pseudomonadati</taxon>
        <taxon>Pseudomonadota</taxon>
        <taxon>Betaproteobacteria</taxon>
        <taxon>Rhodocyclales</taxon>
        <taxon>Azonexaceae</taxon>
        <taxon>Dechloromonas</taxon>
    </lineage>
</organism>
<feature type="chain" id="PRO_0000337778" description="2-hydroxy-6-oxononadienedioate/2-hydroxy-6-oxononatrienedioate hydrolase 1">
    <location>
        <begin position="1"/>
        <end position="289"/>
    </location>
</feature>
<feature type="domain" description="AB hydrolase-1" evidence="1">
    <location>
        <begin position="39"/>
        <end position="275"/>
    </location>
</feature>
<feature type="active site" description="Proton acceptor" evidence="2">
    <location>
        <position position="269"/>
    </location>
</feature>
<feature type="site" description="Transition state stabilizer" evidence="2">
    <location>
        <position position="116"/>
    </location>
</feature>
<feature type="site" description="Catalytic role in ketonization of the dienol substrate (substrate destabilization)" evidence="2">
    <location>
        <position position="194"/>
    </location>
</feature>
<protein>
    <recommendedName>
        <fullName evidence="2">2-hydroxy-6-oxononadienedioate/2-hydroxy-6-oxononatrienedioate hydrolase 1</fullName>
        <ecNumber evidence="2">3.7.1.14</ecNumber>
    </recommendedName>
    <alternativeName>
        <fullName evidence="2">2-hydroxy-6-ketonona-2,4-diene-1,9-dioic acid 5,6-hydrolase 1</fullName>
    </alternativeName>
    <alternativeName>
        <fullName evidence="2">2-hydroxy-6-oxonona-2,4,7-triene-1,9-dioic acid 5,6-hydrolase 1</fullName>
    </alternativeName>
    <alternativeName>
        <fullName evidence="2">2-hydroxy-6-oxonona-2,4-diene-1,9-dioic acid 5,6-hydrolase 1</fullName>
    </alternativeName>
</protein>
<proteinExistence type="inferred from homology"/>
<accession>Q47HL4</accession>
<reference key="1">
    <citation type="journal article" date="2009" name="BMC Genomics">
        <title>Metabolic analysis of the soil microbe Dechloromonas aromatica str. RCB: indications of a surprisingly complex life-style and cryptic anaerobic pathways for aromatic degradation.</title>
        <authorList>
            <person name="Salinero K.K."/>
            <person name="Keller K."/>
            <person name="Feil W.S."/>
            <person name="Feil H."/>
            <person name="Trong S."/>
            <person name="Di Bartolo G."/>
            <person name="Lapidus A."/>
        </authorList>
    </citation>
    <scope>NUCLEOTIDE SEQUENCE [LARGE SCALE GENOMIC DNA]</scope>
    <source>
        <strain>RCB</strain>
    </source>
</reference>
<keyword id="KW-0058">Aromatic hydrocarbons catabolism</keyword>
<keyword id="KW-0378">Hydrolase</keyword>
<evidence type="ECO:0000255" key="1"/>
<evidence type="ECO:0000255" key="2">
    <source>
        <dbReference type="HAMAP-Rule" id="MF_01654"/>
    </source>
</evidence>
<dbReference type="EC" id="3.7.1.14" evidence="2"/>
<dbReference type="EMBL" id="CP000089">
    <property type="protein sequence ID" value="AAZ45667.1"/>
    <property type="molecule type" value="Genomic_DNA"/>
</dbReference>
<dbReference type="SMR" id="Q47HL4"/>
<dbReference type="STRING" id="159087.Daro_0911"/>
<dbReference type="ESTHER" id="decar-mhpc1">
    <property type="family name" value="Carbon-carbon_bond_hydrolase"/>
</dbReference>
<dbReference type="MEROPS" id="S33.995"/>
<dbReference type="KEGG" id="dar:Daro_0911"/>
<dbReference type="eggNOG" id="COG2267">
    <property type="taxonomic scope" value="Bacteria"/>
</dbReference>
<dbReference type="HOGENOM" id="CLU_020336_13_2_4"/>
<dbReference type="OrthoDB" id="9799989at2"/>
<dbReference type="UniPathway" id="UPA00714"/>
<dbReference type="GO" id="GO:0005737">
    <property type="term" value="C:cytoplasm"/>
    <property type="evidence" value="ECO:0007669"/>
    <property type="project" value="InterPro"/>
</dbReference>
<dbReference type="GO" id="GO:0052823">
    <property type="term" value="F:2-hydroxy-6-oxonona-2,4,7-trienedioate hydrolase activity"/>
    <property type="evidence" value="ECO:0007669"/>
    <property type="project" value="RHEA"/>
</dbReference>
<dbReference type="GO" id="GO:0018771">
    <property type="term" value="F:2-hydroxy-6-oxonona-2,4-dienedioate hydrolase activity"/>
    <property type="evidence" value="ECO:0007669"/>
    <property type="project" value="UniProtKB-UniRule"/>
</dbReference>
<dbReference type="GO" id="GO:0042803">
    <property type="term" value="F:protein homodimerization activity"/>
    <property type="evidence" value="ECO:0007669"/>
    <property type="project" value="InterPro"/>
</dbReference>
<dbReference type="GO" id="GO:0019380">
    <property type="term" value="P:3-phenylpropionate catabolic process"/>
    <property type="evidence" value="ECO:0007669"/>
    <property type="project" value="UniProtKB-UniRule"/>
</dbReference>
<dbReference type="Gene3D" id="3.40.50.1820">
    <property type="entry name" value="alpha/beta hydrolase"/>
    <property type="match status" value="1"/>
</dbReference>
<dbReference type="HAMAP" id="MF_01654">
    <property type="entry name" value="MhpC"/>
    <property type="match status" value="1"/>
</dbReference>
<dbReference type="InterPro" id="IPR000073">
    <property type="entry name" value="AB_hydrolase_1"/>
</dbReference>
<dbReference type="InterPro" id="IPR029058">
    <property type="entry name" value="AB_hydrolase_fold"/>
</dbReference>
<dbReference type="InterPro" id="IPR000639">
    <property type="entry name" value="Epox_hydrolase-like"/>
</dbReference>
<dbReference type="InterPro" id="IPR023791">
    <property type="entry name" value="MhpC_alpha/beta_hydrolase"/>
</dbReference>
<dbReference type="PANTHER" id="PTHR43689:SF8">
    <property type="entry name" value="ALPHA_BETA-HYDROLASES SUPERFAMILY PROTEIN"/>
    <property type="match status" value="1"/>
</dbReference>
<dbReference type="PANTHER" id="PTHR43689">
    <property type="entry name" value="HYDROLASE"/>
    <property type="match status" value="1"/>
</dbReference>
<dbReference type="Pfam" id="PF00561">
    <property type="entry name" value="Abhydrolase_1"/>
    <property type="match status" value="1"/>
</dbReference>
<dbReference type="PRINTS" id="PR00111">
    <property type="entry name" value="ABHYDROLASE"/>
</dbReference>
<dbReference type="PRINTS" id="PR00412">
    <property type="entry name" value="EPOXHYDRLASE"/>
</dbReference>
<dbReference type="SUPFAM" id="SSF53474">
    <property type="entry name" value="alpha/beta-Hydrolases"/>
    <property type="match status" value="1"/>
</dbReference>
<comment type="function">
    <text evidence="2">Catalyzes the cleavage of the C5-C6 bond of 2-hydroxy-6-oxononadienedioate and 2-hydroxy-6-oxononatrienedioate, a dienol ring fission product of the bacterial meta-cleavage pathway for degradation of phenylpropionic acid.</text>
</comment>
<comment type="catalytic activity">
    <reaction evidence="2">
        <text>(2Z,4E)-2-hydroxy-6-oxonona-2,4-dienedioate + H2O = (2Z)-2-hydroxypenta-2,4-dienoate + succinate + H(+)</text>
        <dbReference type="Rhea" id="RHEA:34187"/>
        <dbReference type="ChEBI" id="CHEBI:15377"/>
        <dbReference type="ChEBI" id="CHEBI:15378"/>
        <dbReference type="ChEBI" id="CHEBI:30031"/>
        <dbReference type="ChEBI" id="CHEBI:66887"/>
        <dbReference type="ChEBI" id="CHEBI:67152"/>
        <dbReference type="EC" id="3.7.1.14"/>
    </reaction>
</comment>
<comment type="catalytic activity">
    <reaction evidence="2">
        <text>(2Z,4E,7E)-2-hydroxy-6-oxonona-2,4,7-trienedioate + H2O = (2Z)-2-hydroxypenta-2,4-dienoate + fumarate + H(+)</text>
        <dbReference type="Rhea" id="RHEA:34191"/>
        <dbReference type="ChEBI" id="CHEBI:15377"/>
        <dbReference type="ChEBI" id="CHEBI:15378"/>
        <dbReference type="ChEBI" id="CHEBI:29806"/>
        <dbReference type="ChEBI" id="CHEBI:66888"/>
        <dbReference type="ChEBI" id="CHEBI:67152"/>
        <dbReference type="EC" id="3.7.1.14"/>
    </reaction>
</comment>
<comment type="pathway">
    <text evidence="2">Aromatic compound metabolism; 3-phenylpropanoate degradation.</text>
</comment>
<comment type="subunit">
    <text evidence="2">Homodimer.</text>
</comment>
<comment type="similarity">
    <text evidence="2">Belongs to the AB hydrolase superfamily. MhpC family.</text>
</comment>
<sequence length="289" mass="31718">MSTTSQTLTEAATSKFVRIKEGDLDLQLHYNDCGSGVETVVMLHGSGPGASGWANFNRNVEPLVAAGYRVVLMDCPGWSKSDPIVCSGSRSELNARALKGLLDAIGLDKVHIIGNSMGGHSAVAFALANPSRVGKLILMGGGTGGPSQFVPMPTEGIKLLQGLYREPTIDNLKKMMAVFVFDSSSLTEELYQARLDNMMSRRDHLENFVKSLAINPKQFTDYGPRLGEVTAPALVIWGRDDRFVPMDAGLRLIWGMPNAELHIFNRCGHWAQWEHADKFNRMVLDFLTH</sequence>
<gene>
    <name evidence="2" type="primary">mhpC1</name>
    <name type="ordered locus">Daro_0911</name>
</gene>
<name>MHPC1_DECAR</name>